<organism>
    <name type="scientific">Nitrosopumilus maritimus (strain SCM1)</name>
    <dbReference type="NCBI Taxonomy" id="436308"/>
    <lineage>
        <taxon>Archaea</taxon>
        <taxon>Nitrososphaerota</taxon>
        <taxon>Nitrososphaeria</taxon>
        <taxon>Nitrosopumilales</taxon>
        <taxon>Nitrosopumilaceae</taxon>
        <taxon>Nitrosopumilus</taxon>
    </lineage>
</organism>
<comment type="function">
    <text evidence="1">Involved in the biosynthesis of the chorismate, which leads to the biosynthesis of aromatic amino acids. Catalyzes the reversible NADPH linked reduction of 3-dehydroshikimate (DHSA) to yield shikimate (SA).</text>
</comment>
<comment type="catalytic activity">
    <reaction evidence="1">
        <text>shikimate + NADP(+) = 3-dehydroshikimate + NADPH + H(+)</text>
        <dbReference type="Rhea" id="RHEA:17737"/>
        <dbReference type="ChEBI" id="CHEBI:15378"/>
        <dbReference type="ChEBI" id="CHEBI:16630"/>
        <dbReference type="ChEBI" id="CHEBI:36208"/>
        <dbReference type="ChEBI" id="CHEBI:57783"/>
        <dbReference type="ChEBI" id="CHEBI:58349"/>
        <dbReference type="EC" id="1.1.1.25"/>
    </reaction>
</comment>
<comment type="pathway">
    <text evidence="1">Metabolic intermediate biosynthesis; chorismate biosynthesis; chorismate from D-erythrose 4-phosphate and phosphoenolpyruvate: step 4/7.</text>
</comment>
<comment type="subunit">
    <text evidence="1">Homodimer.</text>
</comment>
<comment type="similarity">
    <text evidence="1">Belongs to the shikimate dehydrogenase family.</text>
</comment>
<sequence length="273" mass="29824">MGKTFAVIGDPIDHSLSPNIHSAAFRELNLDCSYIAYRIPKDELGEGIEGLKKIQIAGFNVTIPHKIEMMKYLDKIDESCSLIGAVNTVVSNDGVLKGYNTDMDGFLEPLKKRNIEIENSNVLLLGAGGAARAIVAGFAKEKAKSITIANRTIEKANNLVEFAKKISLDANAITIDQVGESAKDYNIIVNATSIGLQNESSPISFEGVNEKTVVYDIVYLPMNTDFLKKAKEKNATIIFGYEMLLGQAVRAFEIWHGMEAPYNAMKKALLGGF</sequence>
<gene>
    <name evidence="1" type="primary">aroE</name>
    <name type="ordered locus">Nmar_0550</name>
</gene>
<dbReference type="EC" id="1.1.1.25" evidence="1"/>
<dbReference type="EMBL" id="CP000866">
    <property type="protein sequence ID" value="ABX12446.1"/>
    <property type="molecule type" value="Genomic_DNA"/>
</dbReference>
<dbReference type="RefSeq" id="WP_012214933.1">
    <property type="nucleotide sequence ID" value="NC_010085.1"/>
</dbReference>
<dbReference type="SMR" id="A9A233"/>
<dbReference type="STRING" id="436308.Nmar_0550"/>
<dbReference type="EnsemblBacteria" id="ABX12446">
    <property type="protein sequence ID" value="ABX12446"/>
    <property type="gene ID" value="Nmar_0550"/>
</dbReference>
<dbReference type="GeneID" id="5773329"/>
<dbReference type="KEGG" id="nmr:Nmar_0550"/>
<dbReference type="eggNOG" id="arCOG01033">
    <property type="taxonomic scope" value="Archaea"/>
</dbReference>
<dbReference type="HOGENOM" id="CLU_044063_4_1_2"/>
<dbReference type="InParanoid" id="A9A233"/>
<dbReference type="OrthoDB" id="8744at2157"/>
<dbReference type="PhylomeDB" id="A9A233"/>
<dbReference type="UniPathway" id="UPA00053">
    <property type="reaction ID" value="UER00087"/>
</dbReference>
<dbReference type="Proteomes" id="UP000000792">
    <property type="component" value="Chromosome"/>
</dbReference>
<dbReference type="GO" id="GO:0050661">
    <property type="term" value="F:NADP binding"/>
    <property type="evidence" value="ECO:0007669"/>
    <property type="project" value="InterPro"/>
</dbReference>
<dbReference type="GO" id="GO:0004764">
    <property type="term" value="F:shikimate 3-dehydrogenase (NADP+) activity"/>
    <property type="evidence" value="ECO:0000318"/>
    <property type="project" value="GO_Central"/>
</dbReference>
<dbReference type="GO" id="GO:0008652">
    <property type="term" value="P:amino acid biosynthetic process"/>
    <property type="evidence" value="ECO:0007669"/>
    <property type="project" value="UniProtKB-KW"/>
</dbReference>
<dbReference type="GO" id="GO:0009073">
    <property type="term" value="P:aromatic amino acid family biosynthetic process"/>
    <property type="evidence" value="ECO:0007669"/>
    <property type="project" value="UniProtKB-KW"/>
</dbReference>
<dbReference type="GO" id="GO:0009423">
    <property type="term" value="P:chorismate biosynthetic process"/>
    <property type="evidence" value="ECO:0000318"/>
    <property type="project" value="GO_Central"/>
</dbReference>
<dbReference type="GO" id="GO:0019632">
    <property type="term" value="P:shikimate metabolic process"/>
    <property type="evidence" value="ECO:0000318"/>
    <property type="project" value="GO_Central"/>
</dbReference>
<dbReference type="CDD" id="cd01065">
    <property type="entry name" value="NAD_bind_Shikimate_DH"/>
    <property type="match status" value="1"/>
</dbReference>
<dbReference type="FunFam" id="3.40.50.720:FF:000086">
    <property type="entry name" value="Quinate/shikimate dehydrogenase"/>
    <property type="match status" value="1"/>
</dbReference>
<dbReference type="FunFam" id="3.40.50.10860:FF:000016">
    <property type="entry name" value="Shikimate dehydrogenase (NADP(+))"/>
    <property type="match status" value="1"/>
</dbReference>
<dbReference type="Gene3D" id="3.40.50.10860">
    <property type="entry name" value="Leucine Dehydrogenase, chain A, domain 1"/>
    <property type="match status" value="1"/>
</dbReference>
<dbReference type="Gene3D" id="3.40.50.720">
    <property type="entry name" value="NAD(P)-binding Rossmann-like Domain"/>
    <property type="match status" value="1"/>
</dbReference>
<dbReference type="HAMAP" id="MF_00222">
    <property type="entry name" value="Shikimate_DH_AroE"/>
    <property type="match status" value="1"/>
</dbReference>
<dbReference type="InterPro" id="IPR046346">
    <property type="entry name" value="Aminoacid_DH-like_N_sf"/>
</dbReference>
<dbReference type="InterPro" id="IPR036291">
    <property type="entry name" value="NAD(P)-bd_dom_sf"/>
</dbReference>
<dbReference type="InterPro" id="IPR041121">
    <property type="entry name" value="SDH_C"/>
</dbReference>
<dbReference type="InterPro" id="IPR011342">
    <property type="entry name" value="Shikimate_DH"/>
</dbReference>
<dbReference type="InterPro" id="IPR013708">
    <property type="entry name" value="Shikimate_DH-bd_N"/>
</dbReference>
<dbReference type="InterPro" id="IPR022893">
    <property type="entry name" value="Shikimate_DH_fam"/>
</dbReference>
<dbReference type="InterPro" id="IPR006151">
    <property type="entry name" value="Shikm_DH/Glu-tRNA_Rdtase"/>
</dbReference>
<dbReference type="NCBIfam" id="TIGR00507">
    <property type="entry name" value="aroE"/>
    <property type="match status" value="1"/>
</dbReference>
<dbReference type="PANTHER" id="PTHR21089:SF1">
    <property type="entry name" value="BIFUNCTIONAL 3-DEHYDROQUINATE DEHYDRATASE_SHIKIMATE DEHYDROGENASE, CHLOROPLASTIC"/>
    <property type="match status" value="1"/>
</dbReference>
<dbReference type="PANTHER" id="PTHR21089">
    <property type="entry name" value="SHIKIMATE DEHYDROGENASE"/>
    <property type="match status" value="1"/>
</dbReference>
<dbReference type="Pfam" id="PF18317">
    <property type="entry name" value="SDH_C"/>
    <property type="match status" value="1"/>
</dbReference>
<dbReference type="Pfam" id="PF01488">
    <property type="entry name" value="Shikimate_DH"/>
    <property type="match status" value="1"/>
</dbReference>
<dbReference type="Pfam" id="PF08501">
    <property type="entry name" value="Shikimate_dh_N"/>
    <property type="match status" value="1"/>
</dbReference>
<dbReference type="SUPFAM" id="SSF53223">
    <property type="entry name" value="Aminoacid dehydrogenase-like, N-terminal domain"/>
    <property type="match status" value="1"/>
</dbReference>
<dbReference type="SUPFAM" id="SSF51735">
    <property type="entry name" value="NAD(P)-binding Rossmann-fold domains"/>
    <property type="match status" value="1"/>
</dbReference>
<proteinExistence type="inferred from homology"/>
<name>AROE_NITMS</name>
<reference key="1">
    <citation type="journal article" date="2010" name="Proc. Natl. Acad. Sci. U.S.A.">
        <title>Nitrosopumilus maritimus genome reveals unique mechanisms for nitrification and autotrophy in globally distributed marine crenarchaea.</title>
        <authorList>
            <person name="Walker C.B."/>
            <person name="de la Torre J.R."/>
            <person name="Klotz M.G."/>
            <person name="Urakawa H."/>
            <person name="Pinel N."/>
            <person name="Arp D.J."/>
            <person name="Brochier-Armanet C."/>
            <person name="Chain P.S."/>
            <person name="Chan P.P."/>
            <person name="Gollabgir A."/>
            <person name="Hemp J."/>
            <person name="Hugler M."/>
            <person name="Karr E.A."/>
            <person name="Konneke M."/>
            <person name="Shin M."/>
            <person name="Lawton T.J."/>
            <person name="Lowe T."/>
            <person name="Martens-Habbena W."/>
            <person name="Sayavedra-Soto L.A."/>
            <person name="Lang D."/>
            <person name="Sievert S.M."/>
            <person name="Rosenzweig A.C."/>
            <person name="Manning G."/>
            <person name="Stahl D.A."/>
        </authorList>
    </citation>
    <scope>NUCLEOTIDE SEQUENCE [LARGE SCALE GENOMIC DNA]</scope>
    <source>
        <strain>SCM1</strain>
    </source>
</reference>
<evidence type="ECO:0000255" key="1">
    <source>
        <dbReference type="HAMAP-Rule" id="MF_00222"/>
    </source>
</evidence>
<accession>A9A233</accession>
<feature type="chain" id="PRO_1000204269" description="Shikimate dehydrogenase (NADP(+))">
    <location>
        <begin position="1"/>
        <end position="273"/>
    </location>
</feature>
<feature type="active site" description="Proton acceptor" evidence="1">
    <location>
        <position position="66"/>
    </location>
</feature>
<feature type="binding site" evidence="1">
    <location>
        <begin position="15"/>
        <end position="17"/>
    </location>
    <ligand>
        <name>shikimate</name>
        <dbReference type="ChEBI" id="CHEBI:36208"/>
    </ligand>
</feature>
<feature type="binding site" evidence="1">
    <location>
        <position position="62"/>
    </location>
    <ligand>
        <name>shikimate</name>
        <dbReference type="ChEBI" id="CHEBI:36208"/>
    </ligand>
</feature>
<feature type="binding site" evidence="1">
    <location>
        <position position="78"/>
    </location>
    <ligand>
        <name>NADP(+)</name>
        <dbReference type="ChEBI" id="CHEBI:58349"/>
    </ligand>
</feature>
<feature type="binding site" evidence="1">
    <location>
        <position position="87"/>
    </location>
    <ligand>
        <name>shikimate</name>
        <dbReference type="ChEBI" id="CHEBI:36208"/>
    </ligand>
</feature>
<feature type="binding site" evidence="1">
    <location>
        <position position="102"/>
    </location>
    <ligand>
        <name>shikimate</name>
        <dbReference type="ChEBI" id="CHEBI:36208"/>
    </ligand>
</feature>
<feature type="binding site" evidence="1">
    <location>
        <begin position="126"/>
        <end position="130"/>
    </location>
    <ligand>
        <name>NADP(+)</name>
        <dbReference type="ChEBI" id="CHEBI:58349"/>
    </ligand>
</feature>
<feature type="binding site" evidence="1">
    <location>
        <begin position="150"/>
        <end position="155"/>
    </location>
    <ligand>
        <name>NADP(+)</name>
        <dbReference type="ChEBI" id="CHEBI:58349"/>
    </ligand>
</feature>
<feature type="binding site" evidence="1">
    <location>
        <position position="217"/>
    </location>
    <ligand>
        <name>NADP(+)</name>
        <dbReference type="ChEBI" id="CHEBI:58349"/>
    </ligand>
</feature>
<feature type="binding site" evidence="1">
    <location>
        <position position="219"/>
    </location>
    <ligand>
        <name>shikimate</name>
        <dbReference type="ChEBI" id="CHEBI:36208"/>
    </ligand>
</feature>
<feature type="binding site" evidence="1">
    <location>
        <position position="240"/>
    </location>
    <ligand>
        <name>NADP(+)</name>
        <dbReference type="ChEBI" id="CHEBI:58349"/>
    </ligand>
</feature>
<protein>
    <recommendedName>
        <fullName evidence="1">Shikimate dehydrogenase (NADP(+))</fullName>
        <shortName evidence="1">SDH</shortName>
        <ecNumber evidence="1">1.1.1.25</ecNumber>
    </recommendedName>
</protein>
<keyword id="KW-0028">Amino-acid biosynthesis</keyword>
<keyword id="KW-0057">Aromatic amino acid biosynthesis</keyword>
<keyword id="KW-0521">NADP</keyword>
<keyword id="KW-0560">Oxidoreductase</keyword>
<keyword id="KW-1185">Reference proteome</keyword>